<reference key="1">
    <citation type="journal article" date="1992" name="Proc. R. Soc. B">
        <title>Phylogenetic relationships of the thylacine (Mammalia: Thylacinidae) among dasyuroid marsupials: evidence from cytochrome b DNA sequences.</title>
        <authorList>
            <person name="Krajewski C."/>
            <person name="Driskell A.C."/>
            <person name="Baverstock P.R."/>
            <person name="Braun M.J."/>
        </authorList>
    </citation>
    <scope>NUCLEOTIDE SEQUENCE [GENOMIC DNA]</scope>
</reference>
<gene>
    <name type="primary">MT-CYB</name>
    <name type="synonym">COB</name>
    <name type="synonym">CYTB</name>
    <name type="synonym">MTCYB</name>
</gene>
<feature type="chain" id="PRO_0000061450" description="Cytochrome b">
    <location>
        <begin position="1"/>
        <end position="381"/>
    </location>
</feature>
<feature type="transmembrane region" description="Helical" evidence="2">
    <location>
        <begin position="33"/>
        <end position="53"/>
    </location>
</feature>
<feature type="transmembrane region" description="Helical" evidence="2">
    <location>
        <begin position="77"/>
        <end position="98"/>
    </location>
</feature>
<feature type="transmembrane region" description="Helical" evidence="2">
    <location>
        <begin position="113"/>
        <end position="133"/>
    </location>
</feature>
<feature type="transmembrane region" description="Helical" evidence="2">
    <location>
        <begin position="178"/>
        <end position="198"/>
    </location>
</feature>
<feature type="transmembrane region" description="Helical" evidence="2">
    <location>
        <begin position="226"/>
        <end position="246"/>
    </location>
</feature>
<feature type="transmembrane region" description="Helical" evidence="2">
    <location>
        <begin position="288"/>
        <end position="308"/>
    </location>
</feature>
<feature type="transmembrane region" description="Helical" evidence="2">
    <location>
        <begin position="320"/>
        <end position="340"/>
    </location>
</feature>
<feature type="transmembrane region" description="Helical" evidence="2">
    <location>
        <begin position="347"/>
        <end position="367"/>
    </location>
</feature>
<feature type="binding site" description="axial binding residue" evidence="2">
    <location>
        <position position="83"/>
    </location>
    <ligand>
        <name>heme b</name>
        <dbReference type="ChEBI" id="CHEBI:60344"/>
        <label>b562</label>
    </ligand>
    <ligandPart>
        <name>Fe</name>
        <dbReference type="ChEBI" id="CHEBI:18248"/>
    </ligandPart>
</feature>
<feature type="binding site" description="axial binding residue" evidence="2">
    <location>
        <position position="97"/>
    </location>
    <ligand>
        <name>heme b</name>
        <dbReference type="ChEBI" id="CHEBI:60344"/>
        <label>b566</label>
    </ligand>
    <ligandPart>
        <name>Fe</name>
        <dbReference type="ChEBI" id="CHEBI:18248"/>
    </ligandPart>
</feature>
<feature type="binding site" description="axial binding residue" evidence="2">
    <location>
        <position position="182"/>
    </location>
    <ligand>
        <name>heme b</name>
        <dbReference type="ChEBI" id="CHEBI:60344"/>
        <label>b562</label>
    </ligand>
    <ligandPart>
        <name>Fe</name>
        <dbReference type="ChEBI" id="CHEBI:18248"/>
    </ligandPart>
</feature>
<feature type="binding site" description="axial binding residue" evidence="2">
    <location>
        <position position="196"/>
    </location>
    <ligand>
        <name>heme b</name>
        <dbReference type="ChEBI" id="CHEBI:60344"/>
        <label>b566</label>
    </ligand>
    <ligandPart>
        <name>Fe</name>
        <dbReference type="ChEBI" id="CHEBI:18248"/>
    </ligandPart>
</feature>
<feature type="binding site" evidence="2">
    <location>
        <position position="201"/>
    </location>
    <ligand>
        <name>a ubiquinone</name>
        <dbReference type="ChEBI" id="CHEBI:16389"/>
    </ligand>
</feature>
<keyword id="KW-0249">Electron transport</keyword>
<keyword id="KW-0349">Heme</keyword>
<keyword id="KW-0408">Iron</keyword>
<keyword id="KW-0472">Membrane</keyword>
<keyword id="KW-0479">Metal-binding</keyword>
<keyword id="KW-0496">Mitochondrion</keyword>
<keyword id="KW-0999">Mitochondrion inner membrane</keyword>
<keyword id="KW-0679">Respiratory chain</keyword>
<keyword id="KW-0812">Transmembrane</keyword>
<keyword id="KW-1133">Transmembrane helix</keyword>
<keyword id="KW-0813">Transport</keyword>
<keyword id="KW-0830">Ubiquinone</keyword>
<sequence>MINLRKTHPLLKIINQSFIDLPAPSNISAWWNFGSLLGICLIIQILTGLFLAMHYTSDTLTAFSSVAHICRDVNHGWLLRNLHANGASMFFMCLFLHVGRGIYYGSYLYKETWNIGVILLLTVMAMAFVGYVLPWGQMSFWGATVITNLLSAIPYIGTTLAEWIWGGFAVDKATLTRFFAFHFILPFIVTALALVHLLFLHETGSNNPSGINPDSDKIPFHPYYTIKDALGLMLLFLVLLLLALFSPDLLGDPDNFSPANPLNTPPHIKPEWYFLFAYAILRSIPNKLGGVLALLASILILLIIPLLHTANQRSMMFRPISQTLFWILTANLITLTWIGGQPVEQPFIIIGQLAPMLYFLLILVLMPLAGLFENYMLKPKW</sequence>
<evidence type="ECO:0000250" key="1"/>
<evidence type="ECO:0000250" key="2">
    <source>
        <dbReference type="UniProtKB" id="P00157"/>
    </source>
</evidence>
<evidence type="ECO:0000255" key="3">
    <source>
        <dbReference type="PROSITE-ProRule" id="PRU00967"/>
    </source>
</evidence>
<evidence type="ECO:0000255" key="4">
    <source>
        <dbReference type="PROSITE-ProRule" id="PRU00968"/>
    </source>
</evidence>
<organism>
    <name type="scientific">Pseudantechinus macdonnellensis</name>
    <name type="common">Fat-tailed marsupial mouse</name>
    <dbReference type="NCBI Taxonomy" id="9299"/>
    <lineage>
        <taxon>Eukaryota</taxon>
        <taxon>Metazoa</taxon>
        <taxon>Chordata</taxon>
        <taxon>Craniata</taxon>
        <taxon>Vertebrata</taxon>
        <taxon>Euteleostomi</taxon>
        <taxon>Mammalia</taxon>
        <taxon>Metatheria</taxon>
        <taxon>Dasyuromorphia</taxon>
        <taxon>Dasyuridae</taxon>
        <taxon>Pseudantechinus</taxon>
    </lineage>
</organism>
<proteinExistence type="inferred from homology"/>
<protein>
    <recommendedName>
        <fullName>Cytochrome b</fullName>
    </recommendedName>
    <alternativeName>
        <fullName>Complex III subunit 3</fullName>
    </alternativeName>
    <alternativeName>
        <fullName>Complex III subunit III</fullName>
    </alternativeName>
    <alternativeName>
        <fullName>Cytochrome b-c1 complex subunit 3</fullName>
    </alternativeName>
    <alternativeName>
        <fullName>Ubiquinol-cytochrome-c reductase complex cytochrome b subunit</fullName>
    </alternativeName>
</protein>
<geneLocation type="mitochondrion"/>
<accession>O03543</accession>
<accession>Q35547</accession>
<comment type="function">
    <text evidence="2">Component of the ubiquinol-cytochrome c reductase complex (complex III or cytochrome b-c1 complex) that is part of the mitochondrial respiratory chain. The b-c1 complex mediates electron transfer from ubiquinol to cytochrome c. Contributes to the generation of a proton gradient across the mitochondrial membrane that is then used for ATP synthesis.</text>
</comment>
<comment type="cofactor">
    <cofactor evidence="2">
        <name>heme b</name>
        <dbReference type="ChEBI" id="CHEBI:60344"/>
    </cofactor>
    <text evidence="2">Binds 2 heme b groups non-covalently.</text>
</comment>
<comment type="subunit">
    <text evidence="2">The cytochrome bc1 complex contains 11 subunits: 3 respiratory subunits (MT-CYB, CYC1 and UQCRFS1), 2 core proteins (UQCRC1 and UQCRC2) and 6 low-molecular weight proteins (UQCRH/QCR6, UQCRB/QCR7, UQCRQ/QCR8, UQCR10/QCR9, UQCR11/QCR10 and a cleavage product of UQCRFS1). This cytochrome bc1 complex then forms a dimer.</text>
</comment>
<comment type="subcellular location">
    <subcellularLocation>
        <location evidence="2">Mitochondrion inner membrane</location>
        <topology evidence="2">Multi-pass membrane protein</topology>
    </subcellularLocation>
</comment>
<comment type="miscellaneous">
    <text evidence="1">Heme 1 (or BL or b562) is low-potential and absorbs at about 562 nm, and heme 2 (or BH or b566) is high-potential and absorbs at about 566 nm.</text>
</comment>
<comment type="similarity">
    <text evidence="3 4">Belongs to the cytochrome b family.</text>
</comment>
<comment type="caution">
    <text evidence="2">The full-length protein contains only eight transmembrane helices, not nine as predicted by bioinformatics tools.</text>
</comment>
<name>CYB_PSEMD</name>
<dbReference type="EMBL" id="M99458">
    <property type="protein sequence ID" value="AAB61678.1"/>
    <property type="molecule type" value="Genomic_DNA"/>
</dbReference>
<dbReference type="SMR" id="O03543"/>
<dbReference type="GO" id="GO:0005743">
    <property type="term" value="C:mitochondrial inner membrane"/>
    <property type="evidence" value="ECO:0007669"/>
    <property type="project" value="UniProtKB-SubCell"/>
</dbReference>
<dbReference type="GO" id="GO:0045275">
    <property type="term" value="C:respiratory chain complex III"/>
    <property type="evidence" value="ECO:0007669"/>
    <property type="project" value="InterPro"/>
</dbReference>
<dbReference type="GO" id="GO:0046872">
    <property type="term" value="F:metal ion binding"/>
    <property type="evidence" value="ECO:0007669"/>
    <property type="project" value="UniProtKB-KW"/>
</dbReference>
<dbReference type="GO" id="GO:0008121">
    <property type="term" value="F:ubiquinol-cytochrome-c reductase activity"/>
    <property type="evidence" value="ECO:0007669"/>
    <property type="project" value="InterPro"/>
</dbReference>
<dbReference type="GO" id="GO:0006122">
    <property type="term" value="P:mitochondrial electron transport, ubiquinol to cytochrome c"/>
    <property type="evidence" value="ECO:0007669"/>
    <property type="project" value="TreeGrafter"/>
</dbReference>
<dbReference type="CDD" id="cd00290">
    <property type="entry name" value="cytochrome_b_C"/>
    <property type="match status" value="1"/>
</dbReference>
<dbReference type="CDD" id="cd00284">
    <property type="entry name" value="Cytochrome_b_N"/>
    <property type="match status" value="1"/>
</dbReference>
<dbReference type="FunFam" id="1.20.810.10:FF:000002">
    <property type="entry name" value="Cytochrome b"/>
    <property type="match status" value="1"/>
</dbReference>
<dbReference type="Gene3D" id="1.20.810.10">
    <property type="entry name" value="Cytochrome Bc1 Complex, Chain C"/>
    <property type="match status" value="1"/>
</dbReference>
<dbReference type="InterPro" id="IPR005798">
    <property type="entry name" value="Cyt_b/b6_C"/>
</dbReference>
<dbReference type="InterPro" id="IPR036150">
    <property type="entry name" value="Cyt_b/b6_C_sf"/>
</dbReference>
<dbReference type="InterPro" id="IPR005797">
    <property type="entry name" value="Cyt_b/b6_N"/>
</dbReference>
<dbReference type="InterPro" id="IPR027387">
    <property type="entry name" value="Cytb/b6-like_sf"/>
</dbReference>
<dbReference type="InterPro" id="IPR030689">
    <property type="entry name" value="Cytochrome_b"/>
</dbReference>
<dbReference type="InterPro" id="IPR048260">
    <property type="entry name" value="Cytochrome_b_C_euk/bac"/>
</dbReference>
<dbReference type="InterPro" id="IPR048259">
    <property type="entry name" value="Cytochrome_b_N_euk/bac"/>
</dbReference>
<dbReference type="InterPro" id="IPR016174">
    <property type="entry name" value="Di-haem_cyt_TM"/>
</dbReference>
<dbReference type="PANTHER" id="PTHR19271">
    <property type="entry name" value="CYTOCHROME B"/>
    <property type="match status" value="1"/>
</dbReference>
<dbReference type="PANTHER" id="PTHR19271:SF16">
    <property type="entry name" value="CYTOCHROME B"/>
    <property type="match status" value="1"/>
</dbReference>
<dbReference type="Pfam" id="PF00032">
    <property type="entry name" value="Cytochrom_B_C"/>
    <property type="match status" value="1"/>
</dbReference>
<dbReference type="Pfam" id="PF00033">
    <property type="entry name" value="Cytochrome_B"/>
    <property type="match status" value="1"/>
</dbReference>
<dbReference type="PIRSF" id="PIRSF038885">
    <property type="entry name" value="COB"/>
    <property type="match status" value="1"/>
</dbReference>
<dbReference type="SUPFAM" id="SSF81648">
    <property type="entry name" value="a domain/subunit of cytochrome bc1 complex (Ubiquinol-cytochrome c reductase)"/>
    <property type="match status" value="1"/>
</dbReference>
<dbReference type="SUPFAM" id="SSF81342">
    <property type="entry name" value="Transmembrane di-heme cytochromes"/>
    <property type="match status" value="1"/>
</dbReference>
<dbReference type="PROSITE" id="PS51003">
    <property type="entry name" value="CYTB_CTER"/>
    <property type="match status" value="1"/>
</dbReference>
<dbReference type="PROSITE" id="PS51002">
    <property type="entry name" value="CYTB_NTER"/>
    <property type="match status" value="1"/>
</dbReference>